<feature type="chain" id="PRO_0000054520" description="NADPH-dependent 1-acyldihydroxyacetone phosphate reductase">
    <location>
        <begin position="1"/>
        <end position="297"/>
    </location>
</feature>
<feature type="short sequence motif" description="GXSXG" evidence="21">
    <location>
        <begin position="16"/>
        <end position="20"/>
    </location>
</feature>
<feature type="active site" description="Nucleophile; for lipase activity" evidence="21">
    <location>
        <position position="18"/>
    </location>
</feature>
<feature type="active site" description="Proton acceptor" evidence="3">
    <location>
        <position position="157"/>
    </location>
</feature>
<feature type="active site" description="Lowers pKa of active site Tyr" evidence="2">
    <location>
        <position position="161"/>
    </location>
</feature>
<feature type="binding site" evidence="1">
    <location>
        <position position="21"/>
    </location>
    <ligand>
        <name>NADP(+)</name>
        <dbReference type="ChEBI" id="CHEBI:58349"/>
    </ligand>
</feature>
<feature type="binding site" evidence="1">
    <location>
        <position position="64"/>
    </location>
    <ligand>
        <name>NADP(+)</name>
        <dbReference type="ChEBI" id="CHEBI:58349"/>
    </ligand>
</feature>
<feature type="binding site" evidence="2">
    <location>
        <position position="93"/>
    </location>
    <ligand>
        <name>NADP(+)</name>
        <dbReference type="ChEBI" id="CHEBI:58349"/>
    </ligand>
</feature>
<feature type="binding site" evidence="1">
    <location>
        <position position="126"/>
    </location>
    <ligand>
        <name>NADP(+)</name>
        <dbReference type="ChEBI" id="CHEBI:58349"/>
    </ligand>
</feature>
<feature type="binding site" evidence="2">
    <location>
        <position position="157"/>
    </location>
    <ligand>
        <name>NADP(+)</name>
        <dbReference type="ChEBI" id="CHEBI:58349"/>
    </ligand>
</feature>
<feature type="binding site" evidence="2">
    <location>
        <position position="161"/>
    </location>
    <ligand>
        <name>NADP(+)</name>
        <dbReference type="ChEBI" id="CHEBI:58349"/>
    </ligand>
</feature>
<feature type="binding site" evidence="2">
    <location>
        <position position="190"/>
    </location>
    <ligand>
        <name>NADP(+)</name>
        <dbReference type="ChEBI" id="CHEBI:58349"/>
    </ligand>
</feature>
<feature type="binding site" evidence="1">
    <location>
        <position position="192"/>
    </location>
    <ligand>
        <name>NADP(+)</name>
        <dbReference type="ChEBI" id="CHEBI:58349"/>
    </ligand>
</feature>
<feature type="mutagenesis site" description="Completely abolishes lipase activity." evidence="12">
    <original>S</original>
    <variation>A</variation>
    <location>
        <position position="18"/>
    </location>
</feature>
<dbReference type="EC" id="1.1.1.101" evidence="8"/>
<dbReference type="EC" id="3.1.1.3" evidence="12"/>
<dbReference type="EMBL" id="Z46833">
    <property type="protein sequence ID" value="CAA86868.1"/>
    <property type="molecule type" value="Genomic_DNA"/>
</dbReference>
<dbReference type="EMBL" id="BK006942">
    <property type="protein sequence ID" value="DAA08429.1"/>
    <property type="molecule type" value="Genomic_DNA"/>
</dbReference>
<dbReference type="PIR" id="S49885">
    <property type="entry name" value="S49885"/>
</dbReference>
<dbReference type="RefSeq" id="NP_012142.3">
    <property type="nucleotide sequence ID" value="NM_001179472.3"/>
</dbReference>
<dbReference type="SMR" id="P40471"/>
<dbReference type="BioGRID" id="34867">
    <property type="interactions" value="157"/>
</dbReference>
<dbReference type="DIP" id="DIP-4614N"/>
<dbReference type="FunCoup" id="P40471">
    <property type="interactions" value="334"/>
</dbReference>
<dbReference type="IntAct" id="P40471">
    <property type="interactions" value="20"/>
</dbReference>
<dbReference type="MINT" id="P40471"/>
<dbReference type="STRING" id="4932.YIL124W"/>
<dbReference type="SwissLipids" id="SLP:000000056"/>
<dbReference type="TCDB" id="1.A.115.1.1">
    <property type="family name" value="the pore-forming nadph-dependent 1-acyldihydroxyacetone phosphate reductase (ayr1) family"/>
</dbReference>
<dbReference type="iPTMnet" id="P40471"/>
<dbReference type="PaxDb" id="4932-YIL124W"/>
<dbReference type="PeptideAtlas" id="P40471"/>
<dbReference type="DNASU" id="854682"/>
<dbReference type="EnsemblFungi" id="YIL124W_mRNA">
    <property type="protein sequence ID" value="YIL124W"/>
    <property type="gene ID" value="YIL124W"/>
</dbReference>
<dbReference type="GeneID" id="854682"/>
<dbReference type="KEGG" id="sce:YIL124W"/>
<dbReference type="AGR" id="SGD:S000001386"/>
<dbReference type="SGD" id="S000001386">
    <property type="gene designation" value="AYR1"/>
</dbReference>
<dbReference type="VEuPathDB" id="FungiDB:YIL124W"/>
<dbReference type="eggNOG" id="KOG1209">
    <property type="taxonomic scope" value="Eukaryota"/>
</dbReference>
<dbReference type="GeneTree" id="ENSGT00940000154593"/>
<dbReference type="HOGENOM" id="CLU_010194_2_9_1"/>
<dbReference type="InParanoid" id="P40471"/>
<dbReference type="OMA" id="GGTPDWF"/>
<dbReference type="OrthoDB" id="2102561at2759"/>
<dbReference type="BioCyc" id="MetaCyc:YIL124W-MONOMER"/>
<dbReference type="BioCyc" id="YEAST:YIL124W-MONOMER"/>
<dbReference type="SABIO-RK" id="P40471"/>
<dbReference type="BioGRID-ORCS" id="854682">
    <property type="hits" value="1 hit in 10 CRISPR screens"/>
</dbReference>
<dbReference type="PRO" id="PR:P40471"/>
<dbReference type="Proteomes" id="UP000002311">
    <property type="component" value="Chromosome IX"/>
</dbReference>
<dbReference type="RNAct" id="P40471">
    <property type="molecule type" value="protein"/>
</dbReference>
<dbReference type="GO" id="GO:0005737">
    <property type="term" value="C:cytoplasm"/>
    <property type="evidence" value="ECO:0007005"/>
    <property type="project" value="SGD"/>
</dbReference>
<dbReference type="GO" id="GO:0005783">
    <property type="term" value="C:endoplasmic reticulum"/>
    <property type="evidence" value="ECO:0000314"/>
    <property type="project" value="SGD"/>
</dbReference>
<dbReference type="GO" id="GO:0005811">
    <property type="term" value="C:lipid droplet"/>
    <property type="evidence" value="ECO:0000314"/>
    <property type="project" value="SGD"/>
</dbReference>
<dbReference type="GO" id="GO:0005741">
    <property type="term" value="C:mitochondrial outer membrane"/>
    <property type="evidence" value="ECO:0007005"/>
    <property type="project" value="SGD"/>
</dbReference>
<dbReference type="GO" id="GO:0005739">
    <property type="term" value="C:mitochondrion"/>
    <property type="evidence" value="ECO:0007005"/>
    <property type="project" value="SGD"/>
</dbReference>
<dbReference type="GO" id="GO:0000140">
    <property type="term" value="F:acylglycerone-phosphate reductase (NADP+) activity"/>
    <property type="evidence" value="ECO:0000315"/>
    <property type="project" value="SGD"/>
</dbReference>
<dbReference type="GO" id="GO:0004806">
    <property type="term" value="F:triacylglycerol lipase activity"/>
    <property type="evidence" value="ECO:0000314"/>
    <property type="project" value="SGD"/>
</dbReference>
<dbReference type="GO" id="GO:0006654">
    <property type="term" value="P:phosphatidic acid biosynthetic process"/>
    <property type="evidence" value="ECO:0000315"/>
    <property type="project" value="SGD"/>
</dbReference>
<dbReference type="GO" id="GO:0019433">
    <property type="term" value="P:triglyceride catabolic process"/>
    <property type="evidence" value="ECO:0000316"/>
    <property type="project" value="SGD"/>
</dbReference>
<dbReference type="CDD" id="cd05374">
    <property type="entry name" value="17beta-HSD-like_SDR_c"/>
    <property type="match status" value="1"/>
</dbReference>
<dbReference type="FunFam" id="3.40.50.720:FF:000261">
    <property type="entry name" value="NADPH-dependent 1-acyldihydroxyacetone phosphate reductase"/>
    <property type="match status" value="1"/>
</dbReference>
<dbReference type="Gene3D" id="3.40.50.720">
    <property type="entry name" value="NAD(P)-binding Rossmann-like Domain"/>
    <property type="match status" value="1"/>
</dbReference>
<dbReference type="InterPro" id="IPR036291">
    <property type="entry name" value="NAD(P)-bd_dom_sf"/>
</dbReference>
<dbReference type="InterPro" id="IPR020904">
    <property type="entry name" value="Sc_DH/Rdtase_CS"/>
</dbReference>
<dbReference type="InterPro" id="IPR002347">
    <property type="entry name" value="SDR_fam"/>
</dbReference>
<dbReference type="PANTHER" id="PTHR44169">
    <property type="entry name" value="NADPH-DEPENDENT 1-ACYLDIHYDROXYACETONE PHOSPHATE REDUCTASE"/>
    <property type="match status" value="1"/>
</dbReference>
<dbReference type="PANTHER" id="PTHR44169:SF6">
    <property type="entry name" value="NADPH-DEPENDENT 1-ACYLDIHYDROXYACETONE PHOSPHATE REDUCTASE"/>
    <property type="match status" value="1"/>
</dbReference>
<dbReference type="Pfam" id="PF00106">
    <property type="entry name" value="adh_short"/>
    <property type="match status" value="1"/>
</dbReference>
<dbReference type="PRINTS" id="PR00081">
    <property type="entry name" value="GDHRDH"/>
</dbReference>
<dbReference type="PRINTS" id="PR00080">
    <property type="entry name" value="SDRFAMILY"/>
</dbReference>
<dbReference type="SUPFAM" id="SSF51735">
    <property type="entry name" value="NAD(P)-binding Rossmann-fold domains"/>
    <property type="match status" value="1"/>
</dbReference>
<dbReference type="PROSITE" id="PS00061">
    <property type="entry name" value="ADH_SHORT"/>
    <property type="match status" value="1"/>
</dbReference>
<evidence type="ECO:0000250" key="1">
    <source>
        <dbReference type="UniProtKB" id="L0E2Z4"/>
    </source>
</evidence>
<evidence type="ECO:0000250" key="2">
    <source>
        <dbReference type="UniProtKB" id="O93868"/>
    </source>
</evidence>
<evidence type="ECO:0000255" key="3">
    <source>
        <dbReference type="PROSITE-ProRule" id="PRU10001"/>
    </source>
</evidence>
<evidence type="ECO:0000269" key="4">
    <source>
    </source>
</evidence>
<evidence type="ECO:0000269" key="5">
    <source>
    </source>
</evidence>
<evidence type="ECO:0000269" key="6">
    <source>
    </source>
</evidence>
<evidence type="ECO:0000269" key="7">
    <source>
    </source>
</evidence>
<evidence type="ECO:0000269" key="8">
    <source>
    </source>
</evidence>
<evidence type="ECO:0000269" key="9">
    <source>
    </source>
</evidence>
<evidence type="ECO:0000269" key="10">
    <source>
    </source>
</evidence>
<evidence type="ECO:0000269" key="11">
    <source>
    </source>
</evidence>
<evidence type="ECO:0000269" key="12">
    <source>
    </source>
</evidence>
<evidence type="ECO:0000269" key="13">
    <source>
    </source>
</evidence>
<evidence type="ECO:0000269" key="14">
    <source>
    </source>
</evidence>
<evidence type="ECO:0000269" key="15">
    <source>
    </source>
</evidence>
<evidence type="ECO:0000303" key="16">
    <source>
    </source>
</evidence>
<evidence type="ECO:0000303" key="17">
    <source>
    </source>
</evidence>
<evidence type="ECO:0000303" key="18">
    <source>
    </source>
</evidence>
<evidence type="ECO:0000305" key="19"/>
<evidence type="ECO:0000305" key="20">
    <source>
    </source>
</evidence>
<evidence type="ECO:0000305" key="21">
    <source>
    </source>
</evidence>
<name>AYR1_YEAST</name>
<protein>
    <recommendedName>
        <fullName evidence="16">NADPH-dependent 1-acyldihydroxyacetone phosphate reductase</fullName>
        <shortName>ADR</shortName>
        <ecNumber evidence="8">1.1.1.101</ecNumber>
    </recommendedName>
    <alternativeName>
        <fullName>1-acyl DHAP reductase</fullName>
    </alternativeName>
    <alternativeName>
        <fullName>Acyl/alkyl DHAP reductase</fullName>
    </alternativeName>
    <alternativeName>
        <fullName>Acylglycerone-phosphate reductase</fullName>
    </alternativeName>
    <alternativeName>
        <fullName evidence="18">Triacylglycerol lipase AYR1</fullName>
        <shortName>TAG lipase</shortName>
        <ecNumber evidence="12">3.1.1.3</ecNumber>
    </alternativeName>
</protein>
<proteinExistence type="evidence at protein level"/>
<gene>
    <name evidence="16" type="primary">AYR1</name>
    <name evidence="17" type="synonym">GBG1</name>
    <name type="ordered locus">YIL124W</name>
</gene>
<comment type="function">
    <text evidence="5 8 11 12 14 15">Can convert acyl and alkyl dihydroxyacetone-phosphate (DHAP) into glycerolipids and ether lipids, respectively. Required for the biosynthesis of phosphatidic acid via the DHAP pathway, where it reduces 1-acyl DHAP to lysophosphatidic acid (LPA) (PubMed:10617610, PubMed:1512203). Also has triacylglycerol (TAG) lipase activity. Involved in the mobilization of the non-polar storage lipids triacylglycerols (TAGs) from lipid particles by hydrolysis of TAGs (PubMed:24187129). Required for spore germination (PubMed:10617610). Plays a role in cell wall biogenesis, but this effect may be indirect by affecting the activities of cell wall synthesis enzymes (PubMed:23956635). Lipolysis of TAG by AYR1 is essential for starvation-induced autophagy (PubMed:26162625). Forms an NADPH-regulated cation-selective channel in the mitochondrial outer membrane (PubMed:28916712).</text>
</comment>
<comment type="catalytic activity">
    <reaction evidence="5">
        <text>a 1-acylglycerone 3-phosphate + NADPH + H(+) = a 1-acyl-sn-glycero-3-phosphate + NADP(+)</text>
        <dbReference type="Rhea" id="RHEA:33375"/>
        <dbReference type="ChEBI" id="CHEBI:15378"/>
        <dbReference type="ChEBI" id="CHEBI:57534"/>
        <dbReference type="ChEBI" id="CHEBI:57783"/>
        <dbReference type="ChEBI" id="CHEBI:57970"/>
        <dbReference type="ChEBI" id="CHEBI:58349"/>
    </reaction>
    <physiologicalReaction direction="left-to-right" evidence="20">
        <dbReference type="Rhea" id="RHEA:33376"/>
    </physiologicalReaction>
</comment>
<comment type="catalytic activity">
    <reaction evidence="8">
        <text>1-hexadecanoyl-sn-glycero-3-phosphate + NADP(+) = 1-hexadecanoylglycerone 3-phosphate + NADPH + H(+)</text>
        <dbReference type="Rhea" id="RHEA:17341"/>
        <dbReference type="ChEBI" id="CHEBI:15378"/>
        <dbReference type="ChEBI" id="CHEBI:57518"/>
        <dbReference type="ChEBI" id="CHEBI:57783"/>
        <dbReference type="ChEBI" id="CHEBI:58303"/>
        <dbReference type="ChEBI" id="CHEBI:58349"/>
        <dbReference type="EC" id="1.1.1.101"/>
    </reaction>
</comment>
<comment type="catalytic activity">
    <reaction evidence="12">
        <text>a triacylglycerol + H2O = a diacylglycerol + a fatty acid + H(+)</text>
        <dbReference type="Rhea" id="RHEA:12044"/>
        <dbReference type="ChEBI" id="CHEBI:15377"/>
        <dbReference type="ChEBI" id="CHEBI:15378"/>
        <dbReference type="ChEBI" id="CHEBI:17855"/>
        <dbReference type="ChEBI" id="CHEBI:18035"/>
        <dbReference type="ChEBI" id="CHEBI:28868"/>
        <dbReference type="EC" id="3.1.1.3"/>
    </reaction>
    <physiologicalReaction direction="left-to-right" evidence="21">
        <dbReference type="Rhea" id="RHEA:12045"/>
    </physiologicalReaction>
</comment>
<comment type="catalytic activity">
    <reaction evidence="12">
        <text>1,2,3-tri-(9Z-octadecenoyl)-glycerol + H2O = di-(9Z)-octadecenoylglycerol + (9Z)-octadecenoate + H(+)</text>
        <dbReference type="Rhea" id="RHEA:38575"/>
        <dbReference type="ChEBI" id="CHEBI:15377"/>
        <dbReference type="ChEBI" id="CHEBI:15378"/>
        <dbReference type="ChEBI" id="CHEBI:30823"/>
        <dbReference type="ChEBI" id="CHEBI:53753"/>
        <dbReference type="ChEBI" id="CHEBI:75945"/>
    </reaction>
    <physiologicalReaction direction="left-to-right" evidence="21">
        <dbReference type="Rhea" id="RHEA:38576"/>
    </physiologicalReaction>
</comment>
<comment type="activity regulation">
    <text evidence="8">Inhibited by divalent cations and N-ethylmaleimide. Activity is reduced under anaerobic growth conditions.</text>
</comment>
<comment type="biophysicochemical properties">
    <kinetics>
        <KM evidence="8">20 uM for NADPH</KM>
        <KM evidence="8">15 uM for hexadecyl dihydroxyacetone-phosphate</KM>
        <KM evidence="12">3.5 mM for p-nitrophenylacetate</KM>
        <KM evidence="12">1.52 mM for p-nitrophenylbutyrate</KM>
        <KM evidence="12">61.21 uM for 1,2,3-tri-(9Z-octadecenoyl)-glycerol</KM>
        <Vmax evidence="8">3.8 nmol/min/mg enzyme for hexadecyl dihydroxyacetone-phosphate</Vmax>
        <Vmax evidence="12">18.5 umol/min/mg enzyme for p-nitrophenylacetate</Vmax>
        <Vmax evidence="12">14.06 umol/min/mg enzyme for p-nitrophenylbutyrate</Vmax>
        <Vmax evidence="12">10.93 pmol/h/mg enzyme for 1,2,3-tri-(9Z-octadecenoyl)-glycerol</Vmax>
    </kinetics>
    <phDependence>
        <text evidence="8">Optimum pH is 6.7-7.2.</text>
    </phDependence>
    <temperatureDependence>
        <text evidence="8">Optimum temperature is 40 degrees Celsius. Thermostable for 10 minutes up to 45 degrees Celsius.</text>
    </temperatureDependence>
</comment>
<comment type="subcellular location">
    <subcellularLocation>
        <location evidence="4 5 10 13">Lipid droplet</location>
    </subcellularLocation>
    <subcellularLocation>
        <location evidence="9 15">Mitochondrion outer membrane</location>
    </subcellularLocation>
    <subcellularLocation>
        <location evidence="6 15">Endoplasmic reticulum</location>
    </subcellularLocation>
</comment>
<comment type="induction">
    <text evidence="11">Expressed during vegetative growth with a maximum level of transcription at G1 phase, after which it is decreased during the remainder of the cell cycle.</text>
</comment>
<comment type="disruption phenotype">
    <text evidence="11">Reduces the activities of beta-1,3-glucan synthase and chitin synthase III, while increasing chitin synthase I and II activities. Shows altered cell wall composition as well as susceptibility towards cell wall inhibitors such as zymolyase, calcofluor white, and nikkomycin Z.</text>
</comment>
<comment type="miscellaneous">
    <text evidence="7">Present with 3671 molecules/cell in log phase SD medium.</text>
</comment>
<comment type="similarity">
    <text evidence="19">Belongs to the short-chain dehydrogenases/reductases (SDR) family.</text>
</comment>
<accession>P40471</accession>
<accession>D6VVG3</accession>
<reference key="1">
    <citation type="journal article" date="1997" name="Nature">
        <title>The nucleotide sequence of Saccharomyces cerevisiae chromosome IX.</title>
        <authorList>
            <person name="Churcher C.M."/>
            <person name="Bowman S."/>
            <person name="Badcock K."/>
            <person name="Bankier A.T."/>
            <person name="Brown D."/>
            <person name="Chillingworth T."/>
            <person name="Connor R."/>
            <person name="Devlin K."/>
            <person name="Gentles S."/>
            <person name="Hamlin N."/>
            <person name="Harris D.E."/>
            <person name="Horsnell T."/>
            <person name="Hunt S."/>
            <person name="Jagels K."/>
            <person name="Jones M."/>
            <person name="Lye G."/>
            <person name="Moule S."/>
            <person name="Odell C."/>
            <person name="Pearson D."/>
            <person name="Rajandream M.A."/>
            <person name="Rice P."/>
            <person name="Rowley N."/>
            <person name="Skelton J."/>
            <person name="Smith V."/>
            <person name="Walsh S.V."/>
            <person name="Whitehead S."/>
            <person name="Barrell B.G."/>
        </authorList>
    </citation>
    <scope>NUCLEOTIDE SEQUENCE [LARGE SCALE GENOMIC DNA]</scope>
    <source>
        <strain>ATCC 204508 / S288c</strain>
    </source>
</reference>
<reference key="2">
    <citation type="journal article" date="2014" name="G3 (Bethesda)">
        <title>The reference genome sequence of Saccharomyces cerevisiae: Then and now.</title>
        <authorList>
            <person name="Engel S.R."/>
            <person name="Dietrich F.S."/>
            <person name="Fisk D.G."/>
            <person name="Binkley G."/>
            <person name="Balakrishnan R."/>
            <person name="Costanzo M.C."/>
            <person name="Dwight S.S."/>
            <person name="Hitz B.C."/>
            <person name="Karra K."/>
            <person name="Nash R.S."/>
            <person name="Weng S."/>
            <person name="Wong E.D."/>
            <person name="Lloyd P."/>
            <person name="Skrzypek M.S."/>
            <person name="Miyasato S.R."/>
            <person name="Simison M."/>
            <person name="Cherry J.M."/>
        </authorList>
    </citation>
    <scope>GENOME REANNOTATION</scope>
    <source>
        <strain>ATCC 204508 / S288c</strain>
    </source>
</reference>
<reference key="3">
    <citation type="submission" date="2005-06" db="UniProtKB">
        <authorList>
            <person name="Bienvenut W.V."/>
            <person name="Peters C."/>
        </authorList>
    </citation>
    <scope>PROTEIN SEQUENCE OF 32-41; 63-79; 127-134; 224-235; 240-252 AND 261-273</scope>
    <scope>IDENTIFICATION BY MASS SPECTROMETRY</scope>
</reference>
<reference key="4">
    <citation type="journal article" date="1992" name="J. Bacteriol.">
        <title>The acyl dihydroxyacetone phosphate pathway enzymes for glycerolipid biosynthesis are present in the yeast Saccharomyces cerevisiae.</title>
        <authorList>
            <person name="Racenis P.V."/>
            <person name="Lai J.L."/>
            <person name="Das A.K."/>
            <person name="Mullick P.C."/>
            <person name="Hajra A.K."/>
            <person name="Greenberg M.L."/>
        </authorList>
    </citation>
    <scope>FUNCTION</scope>
    <scope>CATALYTIC ACTIVITY</scope>
    <scope>BIOPHYSICOCHEMICAL PROPERTIES</scope>
    <scope>ACTIVITY REGULATION</scope>
</reference>
<reference key="5">
    <citation type="journal article" date="1999" name="J. Bacteriol.">
        <title>Identification and characterization of major lipid particle proteins of the yeast Saccharomyces cerevisiae.</title>
        <authorList>
            <person name="Athenstaedt K."/>
            <person name="Zweytick D."/>
            <person name="Jandrositz A."/>
            <person name="Kohlwein S.D."/>
            <person name="Daum G."/>
        </authorList>
    </citation>
    <scope>IDENTIFICATION BY MASS SPECTROMETRY</scope>
    <scope>SUBCELLULAR LOCATION</scope>
</reference>
<reference key="6">
    <citation type="journal article" date="2000" name="J. Biol. Chem.">
        <title>1-acyldihydroxyacetone-phosphate reductase (Ayr1p) of the yeast Saccharomyces cerevisiae encoded by the open reading frame YIL124w is a major component of lipid particles.</title>
        <authorList>
            <person name="Athenstaedt K."/>
            <person name="Daum G."/>
        </authorList>
    </citation>
    <scope>FUNCTION</scope>
    <scope>CATALYTIC ACTIVITY</scope>
    <scope>SUBCELLULAR LOCATION</scope>
</reference>
<reference key="7">
    <citation type="journal article" date="2003" name="Nature">
        <title>Global analysis of protein localization in budding yeast.</title>
        <authorList>
            <person name="Huh W.-K."/>
            <person name="Falvo J.V."/>
            <person name="Gerke L.C."/>
            <person name="Carroll A.S."/>
            <person name="Howson R.W."/>
            <person name="Weissman J.S."/>
            <person name="O'Shea E.K."/>
        </authorList>
    </citation>
    <scope>SUBCELLULAR LOCATION [LARGE SCALE ANALYSIS]</scope>
</reference>
<reference key="8">
    <citation type="journal article" date="2003" name="Nature">
        <title>Global analysis of protein expression in yeast.</title>
        <authorList>
            <person name="Ghaemmaghami S."/>
            <person name="Huh W.-K."/>
            <person name="Bower K."/>
            <person name="Howson R.W."/>
            <person name="Belle A."/>
            <person name="Dephoure N."/>
            <person name="O'Shea E.K."/>
            <person name="Weissman J.S."/>
        </authorList>
    </citation>
    <scope>LEVEL OF PROTEIN EXPRESSION [LARGE SCALE ANALYSIS]</scope>
</reference>
<reference key="9">
    <citation type="journal article" date="2006" name="Mol. Biol. Cell">
        <title>Proteomic analysis of the yeast mitochondrial outer membrane reveals accumulation of a subclass of preproteins.</title>
        <authorList>
            <person name="Zahedi R.P."/>
            <person name="Sickmann A."/>
            <person name="Boehm A.M."/>
            <person name="Winkler C."/>
            <person name="Zufall N."/>
            <person name="Schoenfisch B."/>
            <person name="Guiard B."/>
            <person name="Pfanner N."/>
            <person name="Meisinger C."/>
        </authorList>
    </citation>
    <scope>SUBCELLULAR LOCATION [LARGE SCALE ANALYSIS]</scope>
</reference>
<reference key="10">
    <citation type="journal article" date="2008" name="Mol. Cell. Proteomics">
        <title>A multidimensional chromatography technology for in-depth phosphoproteome analysis.</title>
        <authorList>
            <person name="Albuquerque C.P."/>
            <person name="Smolka M.B."/>
            <person name="Payne S.H."/>
            <person name="Bafna V."/>
            <person name="Eng J."/>
            <person name="Zhou H."/>
        </authorList>
    </citation>
    <scope>IDENTIFICATION BY MASS SPECTROMETRY [LARGE SCALE ANALYSIS]</scope>
</reference>
<reference key="11">
    <citation type="journal article" date="2010" name="Mycobiology">
        <title>Deletion of GBG1/AYR1 alters cell wall biogenesis in Saccharomyces cerevisiae.</title>
        <authorList>
            <person name="Ahn K.W."/>
            <person name="Kim S.W."/>
            <person name="Kang H.G."/>
            <person name="Kim K.H."/>
            <person name="Park Y.H."/>
            <person name="Choi W.J."/>
            <person name="Park H.M."/>
        </authorList>
    </citation>
    <scope>FUNCTION</scope>
    <scope>DISRUPTION PHENOTYPE</scope>
    <scope>INDUCTION</scope>
</reference>
<reference key="12">
    <citation type="journal article" date="2011" name="Biochim. Biophys. Acta">
        <title>Lipid particles/droplets of the yeast Saccharomyces cerevisiae revisited: lipidome meets proteome.</title>
        <authorList>
            <person name="Grillitsch K."/>
            <person name="Connerth M."/>
            <person name="Kofeler H."/>
            <person name="Arrey T.N."/>
            <person name="Rietschel B."/>
            <person name="Wagner B."/>
            <person name="Karas M."/>
            <person name="Daum G."/>
        </authorList>
    </citation>
    <scope>SUBCELLULAR LOCATION</scope>
</reference>
<reference key="13">
    <citation type="journal article" date="2013" name="J. Biol. Chem.">
        <title>Screening for hydrolytic enzymes reveals Ayr1p as a novel triacylglycerol lipase in Saccharomyces cerevisiae.</title>
        <authorList>
            <person name="Ploier B."/>
            <person name="Scharwey M."/>
            <person name="Koch B."/>
            <person name="Schmidt C."/>
            <person name="Schatte J."/>
            <person name="Rechberger G."/>
            <person name="Kollroser M."/>
            <person name="Hermetter A."/>
            <person name="Daum G."/>
        </authorList>
    </citation>
    <scope>FUNCTION</scope>
    <scope>CATALYTIC ACTIVITY</scope>
    <scope>BIOPHYSICOCHEMICAL PROPERTIES</scope>
    <scope>IDENTIFICATION BY MASS SPECTROMETRY</scope>
    <scope>MUTAGENESIS OF SER-18</scope>
</reference>
<reference key="14">
    <citation type="journal article" date="2014" name="J. Lipid Res.">
        <title>High-confidence proteomic analysis of yeast lipid droplets identifies additional droplet proteins and reveals connections to dolichol synthesis and sterol acetylation.</title>
        <authorList>
            <person name="Currie E."/>
            <person name="Guo X."/>
            <person name="Christiano R."/>
            <person name="Chitraju C."/>
            <person name="Kory N."/>
            <person name="Harrison K."/>
            <person name="Haas J."/>
            <person name="Walther T.C."/>
            <person name="Farese R.V. Jr."/>
        </authorList>
    </citation>
    <scope>SUBCELLULAR LOCATION</scope>
</reference>
<reference key="15">
    <citation type="journal article" date="2015" name="EMBO J.">
        <title>Lipid droplets and their component triglycerides and steryl esters regulate autophagosome biogenesis.</title>
        <authorList>
            <person name="Shpilka T."/>
            <person name="Welter E."/>
            <person name="Borovsky N."/>
            <person name="Amar N."/>
            <person name="Mari M."/>
            <person name="Reggiori F."/>
            <person name="Elazar Z."/>
        </authorList>
    </citation>
    <scope>FUNCTION</scope>
</reference>
<reference key="16">
    <citation type="journal article" date="2017" name="J. Cell Biol.">
        <title>Identification of new channels by systematic analysis of the mitochondrial outer membrane.</title>
        <authorList>
            <person name="Krueger V."/>
            <person name="Becker T."/>
            <person name="Becker L."/>
            <person name="Montilla-Martinez M."/>
            <person name="Ellenrieder L."/>
            <person name="Voegtle F.N."/>
            <person name="Meyer H.E."/>
            <person name="Ryan M.T."/>
            <person name="Wiedemann N."/>
            <person name="Warscheid B."/>
            <person name="Pfanner N."/>
            <person name="Wagner R."/>
            <person name="Meisinger C."/>
        </authorList>
    </citation>
    <scope>FUNCTION</scope>
    <scope>SUBCELLULAR LOCATION</scope>
</reference>
<organism>
    <name type="scientific">Saccharomyces cerevisiae (strain ATCC 204508 / S288c)</name>
    <name type="common">Baker's yeast</name>
    <dbReference type="NCBI Taxonomy" id="559292"/>
    <lineage>
        <taxon>Eukaryota</taxon>
        <taxon>Fungi</taxon>
        <taxon>Dikarya</taxon>
        <taxon>Ascomycota</taxon>
        <taxon>Saccharomycotina</taxon>
        <taxon>Saccharomycetes</taxon>
        <taxon>Saccharomycetales</taxon>
        <taxon>Saccharomycetaceae</taxon>
        <taxon>Saccharomyces</taxon>
    </lineage>
</organism>
<keyword id="KW-0903">Direct protein sequencing</keyword>
<keyword id="KW-0256">Endoplasmic reticulum</keyword>
<keyword id="KW-0378">Hydrolase</keyword>
<keyword id="KW-0442">Lipid degradation</keyword>
<keyword id="KW-0551">Lipid droplet</keyword>
<keyword id="KW-0443">Lipid metabolism</keyword>
<keyword id="KW-0472">Membrane</keyword>
<keyword id="KW-0496">Mitochondrion</keyword>
<keyword id="KW-1000">Mitochondrion outer membrane</keyword>
<keyword id="KW-0521">NADP</keyword>
<keyword id="KW-0560">Oxidoreductase</keyword>
<keyword id="KW-1185">Reference proteome</keyword>
<sequence length="297" mass="32814">MSELQSQPKKIAVVTGASGGIGYEVTKELARNGYLVYACARRLEPMAQLAIQFGNDSIKPYKLDISKPEEIVTFSGFLRANLPDGKLDLLYNNAGQSCTFPALDATDAAVEQCFKVNVFGHINMCRELSEFLIKAKGTIVFTGSLAGVVSFPFGSIYSASKAAIHQYARGLHLEMKPFNVRVINAITGGVATDIADKRPLPETSIYNFPEGREAFNSRKTMAKDNKPMPADAYAKQLVKDILSTSDPVDVYRGTFANIMRFVMIFVPYWLLEKGLSKKFKLDKVNNALKSKQKNKDD</sequence>